<gene>
    <name evidence="1" type="primary">TPPP2</name>
</gene>
<dbReference type="EMBL" id="BC102535">
    <property type="protein sequence ID" value="AAI02536.1"/>
    <property type="molecule type" value="mRNA"/>
</dbReference>
<dbReference type="RefSeq" id="NP_001029456.1">
    <property type="nucleotide sequence ID" value="NM_001034284.2"/>
</dbReference>
<dbReference type="SMR" id="Q3T077"/>
<dbReference type="FunCoup" id="Q3T077">
    <property type="interactions" value="43"/>
</dbReference>
<dbReference type="STRING" id="9913.ENSBTAP00000000433"/>
<dbReference type="PaxDb" id="9913-ENSBTAP00000000433"/>
<dbReference type="GeneID" id="507212"/>
<dbReference type="KEGG" id="bta:507212"/>
<dbReference type="CTD" id="122664"/>
<dbReference type="VEuPathDB" id="HostDB:ENSBTAG00000000328"/>
<dbReference type="eggNOG" id="KOG4070">
    <property type="taxonomic scope" value="Eukaryota"/>
</dbReference>
<dbReference type="HOGENOM" id="CLU_091734_0_0_1"/>
<dbReference type="InParanoid" id="Q3T077"/>
<dbReference type="OMA" id="KELGQMR"/>
<dbReference type="OrthoDB" id="548799at2759"/>
<dbReference type="TreeFam" id="TF314440"/>
<dbReference type="Proteomes" id="UP000009136">
    <property type="component" value="Chromosome 10"/>
</dbReference>
<dbReference type="Bgee" id="ENSBTAG00000000328">
    <property type="expression patterns" value="Expressed in semen and 64 other cell types or tissues"/>
</dbReference>
<dbReference type="GO" id="GO:0005829">
    <property type="term" value="C:cytosol"/>
    <property type="evidence" value="ECO:0007669"/>
    <property type="project" value="UniProtKB-SubCell"/>
</dbReference>
<dbReference type="GO" id="GO:0036126">
    <property type="term" value="C:sperm flagellum"/>
    <property type="evidence" value="ECO:0000250"/>
    <property type="project" value="UniProtKB"/>
</dbReference>
<dbReference type="GO" id="GO:0015631">
    <property type="term" value="F:tubulin binding"/>
    <property type="evidence" value="ECO:0000318"/>
    <property type="project" value="GO_Central"/>
</dbReference>
<dbReference type="GO" id="GO:0030154">
    <property type="term" value="P:cell differentiation"/>
    <property type="evidence" value="ECO:0007669"/>
    <property type="project" value="UniProtKB-KW"/>
</dbReference>
<dbReference type="GO" id="GO:0001578">
    <property type="term" value="P:microtubule bundle formation"/>
    <property type="evidence" value="ECO:0000318"/>
    <property type="project" value="GO_Central"/>
</dbReference>
<dbReference type="GO" id="GO:0046785">
    <property type="term" value="P:microtubule polymerization"/>
    <property type="evidence" value="ECO:0000318"/>
    <property type="project" value="GO_Central"/>
</dbReference>
<dbReference type="GO" id="GO:0032273">
    <property type="term" value="P:positive regulation of protein polymerization"/>
    <property type="evidence" value="ECO:0000318"/>
    <property type="project" value="GO_Central"/>
</dbReference>
<dbReference type="GO" id="GO:1901317">
    <property type="term" value="P:regulation of flagellated sperm motility"/>
    <property type="evidence" value="ECO:0000250"/>
    <property type="project" value="UniProtKB"/>
</dbReference>
<dbReference type="GO" id="GO:0007283">
    <property type="term" value="P:spermatogenesis"/>
    <property type="evidence" value="ECO:0007669"/>
    <property type="project" value="UniProtKB-KW"/>
</dbReference>
<dbReference type="FunFam" id="1.10.238.10:FF:000057">
    <property type="entry name" value="Tubulin polymerization-promoting protein family member 3"/>
    <property type="match status" value="1"/>
</dbReference>
<dbReference type="Gene3D" id="1.10.238.10">
    <property type="entry name" value="EF-hand"/>
    <property type="match status" value="1"/>
</dbReference>
<dbReference type="InterPro" id="IPR011992">
    <property type="entry name" value="EF-hand-dom_pair"/>
</dbReference>
<dbReference type="InterPro" id="IPR008907">
    <property type="entry name" value="TPP/p25"/>
</dbReference>
<dbReference type="PANTHER" id="PTHR12932">
    <property type="entry name" value="P25 ALPHA-RELATED"/>
    <property type="match status" value="1"/>
</dbReference>
<dbReference type="PANTHER" id="PTHR12932:SF21">
    <property type="entry name" value="TUBULIN POLYMERIZATION-PROMOTING PROTEIN FAMILY MEMBER 2"/>
    <property type="match status" value="1"/>
</dbReference>
<dbReference type="Pfam" id="PF05517">
    <property type="entry name" value="p25-alpha"/>
    <property type="match status" value="1"/>
</dbReference>
<dbReference type="SUPFAM" id="SSF47473">
    <property type="entry name" value="EF-hand"/>
    <property type="match status" value="1"/>
</dbReference>
<protein>
    <recommendedName>
        <fullName evidence="1">Tubulin polymerization-promoting protein family member 2</fullName>
    </recommendedName>
</protein>
<reference key="1">
    <citation type="submission" date="2005-08" db="EMBL/GenBank/DDBJ databases">
        <authorList>
            <consortium name="NIH - Mammalian Gene Collection (MGC) project"/>
        </authorList>
    </citation>
    <scope>NUCLEOTIDE SEQUENCE [LARGE SCALE MRNA]</scope>
    <source>
        <strain>Crossbred X Angus</strain>
        <tissue>Liver</tissue>
    </source>
</reference>
<organism>
    <name type="scientific">Bos taurus</name>
    <name type="common">Bovine</name>
    <dbReference type="NCBI Taxonomy" id="9913"/>
    <lineage>
        <taxon>Eukaryota</taxon>
        <taxon>Metazoa</taxon>
        <taxon>Chordata</taxon>
        <taxon>Craniata</taxon>
        <taxon>Vertebrata</taxon>
        <taxon>Euteleostomi</taxon>
        <taxon>Mammalia</taxon>
        <taxon>Eutheria</taxon>
        <taxon>Laurasiatheria</taxon>
        <taxon>Artiodactyla</taxon>
        <taxon>Ruminantia</taxon>
        <taxon>Pecora</taxon>
        <taxon>Bovidae</taxon>
        <taxon>Bovinae</taxon>
        <taxon>Bos</taxon>
    </lineage>
</organism>
<keyword id="KW-0966">Cell projection</keyword>
<keyword id="KW-0969">Cilium</keyword>
<keyword id="KW-0963">Cytoplasm</keyword>
<keyword id="KW-0221">Differentiation</keyword>
<keyword id="KW-0282">Flagellum</keyword>
<keyword id="KW-1185">Reference proteome</keyword>
<keyword id="KW-0744">Spermatogenesis</keyword>
<feature type="chain" id="PRO_0000289002" description="Tubulin polymerization-promoting protein family member 2">
    <location>
        <begin position="1"/>
        <end position="171"/>
    </location>
</feature>
<feature type="region of interest" description="Disordered" evidence="3">
    <location>
        <begin position="120"/>
        <end position="171"/>
    </location>
</feature>
<feature type="compositionally biased region" description="Basic and acidic residues" evidence="3">
    <location>
        <begin position="129"/>
        <end position="149"/>
    </location>
</feature>
<comment type="function">
    <text evidence="1 2">Probable regulator of microtubule dynamics required for sperm motility (By similarity). In contrast to other members of the family, has no microtubule bundling activity (By similarity).</text>
</comment>
<comment type="subcellular location">
    <subcellularLocation>
        <location evidence="1">Cytoplasm</location>
        <location evidence="1">Cytosol</location>
    </subcellularLocation>
    <subcellularLocation>
        <location evidence="2">Cell projection</location>
        <location evidence="2">Cilium</location>
        <location evidence="2">Flagellum</location>
    </subcellularLocation>
    <text evidence="2">Present in the middle piece of sperm tail.</text>
</comment>
<comment type="similarity">
    <text evidence="4">Belongs to the TPPP family.</text>
</comment>
<evidence type="ECO:0000250" key="1">
    <source>
        <dbReference type="UniProtKB" id="P59282"/>
    </source>
</evidence>
<evidence type="ECO:0000250" key="2">
    <source>
        <dbReference type="UniProtKB" id="Q0P5Y3"/>
    </source>
</evidence>
<evidence type="ECO:0000256" key="3">
    <source>
        <dbReference type="SAM" id="MobiDB-lite"/>
    </source>
</evidence>
<evidence type="ECO:0000305" key="4"/>
<sequence>MASEAERTFQRFAVFGESSSSGTEMNNKNFSKLCKDCGIMDGKTVTSTDVDIVFSKVKAKNARTITFQQFQEAMKELGQKRFKGKSPDEALENIYKLMEGKDPATTGVTKATTVGGVSRLTDTSKYTGTHKERFDESGKGKGIAGREDVTDNSGYVSGYKGAGTYDKKGSN</sequence>
<proteinExistence type="evidence at transcript level"/>
<accession>Q3T077</accession>
<name>TPPP2_BOVIN</name>